<proteinExistence type="inferred from homology"/>
<reference key="1">
    <citation type="journal article" date="2008" name="J. Bacteriol.">
        <title>Genome sequence of Staphylococcus aureus strain Newman and comparative analysis of staphylococcal genomes: polymorphism and evolution of two major pathogenicity islands.</title>
        <authorList>
            <person name="Baba T."/>
            <person name="Bae T."/>
            <person name="Schneewind O."/>
            <person name="Takeuchi F."/>
            <person name="Hiramatsu K."/>
        </authorList>
    </citation>
    <scope>NUCLEOTIDE SEQUENCE [LARGE SCALE GENOMIC DNA]</scope>
    <source>
        <strain>Newman</strain>
    </source>
</reference>
<comment type="function">
    <text evidence="1">Hydrolyzes ribosome-free peptidyl-tRNAs (with 1 or more amino acids incorporated), which drop off the ribosome during protein synthesis, or as a result of ribosome stalling.</text>
</comment>
<comment type="function">
    <text evidence="1">Catalyzes the release of premature peptidyl moieties from peptidyl-tRNA molecules trapped in stalled 50S ribosomal subunits, and thus maintains levels of free tRNAs and 50S ribosomes.</text>
</comment>
<comment type="catalytic activity">
    <reaction evidence="1">
        <text>an N-acyl-L-alpha-aminoacyl-tRNA + H2O = an N-acyl-L-amino acid + a tRNA + H(+)</text>
        <dbReference type="Rhea" id="RHEA:54448"/>
        <dbReference type="Rhea" id="RHEA-COMP:10123"/>
        <dbReference type="Rhea" id="RHEA-COMP:13883"/>
        <dbReference type="ChEBI" id="CHEBI:15377"/>
        <dbReference type="ChEBI" id="CHEBI:15378"/>
        <dbReference type="ChEBI" id="CHEBI:59874"/>
        <dbReference type="ChEBI" id="CHEBI:78442"/>
        <dbReference type="ChEBI" id="CHEBI:138191"/>
        <dbReference type="EC" id="3.1.1.29"/>
    </reaction>
</comment>
<comment type="subunit">
    <text evidence="1">Monomer.</text>
</comment>
<comment type="subcellular location">
    <subcellularLocation>
        <location evidence="1">Cytoplasm</location>
    </subcellularLocation>
</comment>
<comment type="similarity">
    <text evidence="1">Belongs to the PTH family.</text>
</comment>
<dbReference type="EC" id="3.1.1.29" evidence="1"/>
<dbReference type="EMBL" id="AP009351">
    <property type="protein sequence ID" value="BAF66737.1"/>
    <property type="molecule type" value="Genomic_DNA"/>
</dbReference>
<dbReference type="RefSeq" id="WP_000649791.1">
    <property type="nucleotide sequence ID" value="NZ_JBBIAE010000016.1"/>
</dbReference>
<dbReference type="SMR" id="A6QEF5"/>
<dbReference type="KEGG" id="sae:NWMN_0465"/>
<dbReference type="HOGENOM" id="CLU_062456_4_1_9"/>
<dbReference type="Proteomes" id="UP000006386">
    <property type="component" value="Chromosome"/>
</dbReference>
<dbReference type="GO" id="GO:0005737">
    <property type="term" value="C:cytoplasm"/>
    <property type="evidence" value="ECO:0007669"/>
    <property type="project" value="UniProtKB-SubCell"/>
</dbReference>
<dbReference type="GO" id="GO:0004045">
    <property type="term" value="F:peptidyl-tRNA hydrolase activity"/>
    <property type="evidence" value="ECO:0007669"/>
    <property type="project" value="UniProtKB-UniRule"/>
</dbReference>
<dbReference type="GO" id="GO:0000049">
    <property type="term" value="F:tRNA binding"/>
    <property type="evidence" value="ECO:0007669"/>
    <property type="project" value="UniProtKB-UniRule"/>
</dbReference>
<dbReference type="GO" id="GO:0006515">
    <property type="term" value="P:protein quality control for misfolded or incompletely synthesized proteins"/>
    <property type="evidence" value="ECO:0007669"/>
    <property type="project" value="UniProtKB-UniRule"/>
</dbReference>
<dbReference type="GO" id="GO:0072344">
    <property type="term" value="P:rescue of stalled ribosome"/>
    <property type="evidence" value="ECO:0007669"/>
    <property type="project" value="UniProtKB-UniRule"/>
</dbReference>
<dbReference type="CDD" id="cd00462">
    <property type="entry name" value="PTH"/>
    <property type="match status" value="1"/>
</dbReference>
<dbReference type="FunFam" id="3.40.50.1470:FF:000001">
    <property type="entry name" value="Peptidyl-tRNA hydrolase"/>
    <property type="match status" value="1"/>
</dbReference>
<dbReference type="Gene3D" id="3.40.50.1470">
    <property type="entry name" value="Peptidyl-tRNA hydrolase"/>
    <property type="match status" value="1"/>
</dbReference>
<dbReference type="HAMAP" id="MF_00083">
    <property type="entry name" value="Pept_tRNA_hydro_bact"/>
    <property type="match status" value="1"/>
</dbReference>
<dbReference type="InterPro" id="IPR001328">
    <property type="entry name" value="Pept_tRNA_hydro"/>
</dbReference>
<dbReference type="InterPro" id="IPR018171">
    <property type="entry name" value="Pept_tRNA_hydro_CS"/>
</dbReference>
<dbReference type="InterPro" id="IPR036416">
    <property type="entry name" value="Pept_tRNA_hydro_sf"/>
</dbReference>
<dbReference type="NCBIfam" id="TIGR00447">
    <property type="entry name" value="pth"/>
    <property type="match status" value="1"/>
</dbReference>
<dbReference type="PANTHER" id="PTHR17224">
    <property type="entry name" value="PEPTIDYL-TRNA HYDROLASE"/>
    <property type="match status" value="1"/>
</dbReference>
<dbReference type="PANTHER" id="PTHR17224:SF1">
    <property type="entry name" value="PEPTIDYL-TRNA HYDROLASE"/>
    <property type="match status" value="1"/>
</dbReference>
<dbReference type="Pfam" id="PF01195">
    <property type="entry name" value="Pept_tRNA_hydro"/>
    <property type="match status" value="1"/>
</dbReference>
<dbReference type="SUPFAM" id="SSF53178">
    <property type="entry name" value="Peptidyl-tRNA hydrolase-like"/>
    <property type="match status" value="1"/>
</dbReference>
<dbReference type="PROSITE" id="PS01195">
    <property type="entry name" value="PEPT_TRNA_HYDROL_1"/>
    <property type="match status" value="1"/>
</dbReference>
<dbReference type="PROSITE" id="PS01196">
    <property type="entry name" value="PEPT_TRNA_HYDROL_2"/>
    <property type="match status" value="1"/>
</dbReference>
<protein>
    <recommendedName>
        <fullName evidence="1">Peptidyl-tRNA hydrolase</fullName>
        <shortName evidence="1">Pth</shortName>
        <ecNumber evidence="1">3.1.1.29</ecNumber>
    </recommendedName>
</protein>
<gene>
    <name evidence="1" type="primary">pth</name>
    <name type="ordered locus">NWMN_0465</name>
</gene>
<accession>A6QEF5</accession>
<feature type="chain" id="PRO_1000071231" description="Peptidyl-tRNA hydrolase">
    <location>
        <begin position="1"/>
        <end position="190"/>
    </location>
</feature>
<feature type="active site" description="Proton acceptor" evidence="1">
    <location>
        <position position="19"/>
    </location>
</feature>
<feature type="binding site" evidence="1">
    <location>
        <position position="14"/>
    </location>
    <ligand>
        <name>tRNA</name>
        <dbReference type="ChEBI" id="CHEBI:17843"/>
    </ligand>
</feature>
<feature type="binding site" evidence="1">
    <location>
        <position position="64"/>
    </location>
    <ligand>
        <name>tRNA</name>
        <dbReference type="ChEBI" id="CHEBI:17843"/>
    </ligand>
</feature>
<feature type="binding site" evidence="1">
    <location>
        <position position="66"/>
    </location>
    <ligand>
        <name>tRNA</name>
        <dbReference type="ChEBI" id="CHEBI:17843"/>
    </ligand>
</feature>
<feature type="binding site" evidence="1">
    <location>
        <position position="112"/>
    </location>
    <ligand>
        <name>tRNA</name>
        <dbReference type="ChEBI" id="CHEBI:17843"/>
    </ligand>
</feature>
<feature type="site" description="Discriminates between blocked and unblocked aminoacyl-tRNA" evidence="1">
    <location>
        <position position="9"/>
    </location>
</feature>
<feature type="site" description="Stabilizes the basic form of H active site to accept a proton" evidence="1">
    <location>
        <position position="91"/>
    </location>
</feature>
<organism>
    <name type="scientific">Staphylococcus aureus (strain Newman)</name>
    <dbReference type="NCBI Taxonomy" id="426430"/>
    <lineage>
        <taxon>Bacteria</taxon>
        <taxon>Bacillati</taxon>
        <taxon>Bacillota</taxon>
        <taxon>Bacilli</taxon>
        <taxon>Bacillales</taxon>
        <taxon>Staphylococcaceae</taxon>
        <taxon>Staphylococcus</taxon>
    </lineage>
</organism>
<keyword id="KW-0963">Cytoplasm</keyword>
<keyword id="KW-0378">Hydrolase</keyword>
<keyword id="KW-0694">RNA-binding</keyword>
<keyword id="KW-0820">tRNA-binding</keyword>
<name>PTH_STAAE</name>
<evidence type="ECO:0000255" key="1">
    <source>
        <dbReference type="HAMAP-Rule" id="MF_00083"/>
    </source>
</evidence>
<sequence length="190" mass="21703">MKCIVGLGNIGKRFELTRHNIGFEVVDYILEKNNFSLDKQKFKGAYTIERMNGDKVLFIEPMTMMNLSGEAVAPIMDYYNVNPEDLIVLYDDLDLEQGQVRLRQKGSAGGHNGMKSIIKMLGTDQFKRIRIGVGRPTNGMTVPDYVLQRFSNDEMVTMEKVIEHAARAIEKFVETSRFDHVMNEFNGEVK</sequence>